<comment type="function">
    <text evidence="3 4">Lignin degradation and detoxification of lignin-derived products (Probable). Oxidation of a broad range of substrates including mono-, di- and polyphenols, aromatic amines and methoxy-substituted phenols accompanied by reduction of oxygen to water.</text>
</comment>
<comment type="catalytic activity">
    <reaction evidence="3">
        <text>4 hydroquinone + O2 = 4 benzosemiquinone + 2 H2O</text>
        <dbReference type="Rhea" id="RHEA:11276"/>
        <dbReference type="ChEBI" id="CHEBI:15377"/>
        <dbReference type="ChEBI" id="CHEBI:15379"/>
        <dbReference type="ChEBI" id="CHEBI:17594"/>
        <dbReference type="ChEBI" id="CHEBI:17977"/>
        <dbReference type="EC" id="1.10.3.2"/>
    </reaction>
</comment>
<comment type="cofactor">
    <cofactor evidence="1">
        <name>Cu cation</name>
        <dbReference type="ChEBI" id="CHEBI:23378"/>
    </cofactor>
    <text evidence="1">Binds 4 Cu cations per monomer.</text>
</comment>
<comment type="activity regulation">
    <text evidence="3">Inhibited by sodium azide.</text>
</comment>
<comment type="biophysicochemical properties">
    <kinetics>
        <KM evidence="3">35 uM for 2,2'-azino-bis(3-ethylbenzthiazoline-6-sulphonic acid) (ABTS)</KM>
        <KM evidence="3">1.529 mM for 2-methoxyphenol</KM>
        <KM evidence="3">1.582 mM for hydroquinone</KM>
        <KM evidence="3">17.6 uM for 2,6-dimethoxyphenol</KM>
        <KM evidence="3">265 uM for pyrogallol</KM>
        <Vmax evidence="3">138.9 umol/min/mg enzyme toward ABTS</Vmax>
        <Vmax evidence="3">1.4 umol/min/mg enzyme toward 2-methoxyphenol</Vmax>
        <Vmax evidence="3">9.9 umol/min/mg enzyme toward hydroquinone</Vmax>
        <Vmax evidence="3">11.9 umol/min/mg enzyme toward 2,6-dimethoxyphenol</Vmax>
        <Vmax evidence="3">8.5 umol/min/mg enzyme toward pyrogallol</Vmax>
    </kinetics>
    <phDependence>
        <text evidence="3">Optimum pH is 4.4 with 2,6-dimethoxyphenol as substrate, and less than 2.7 with ABTS as substrate.</text>
    </phDependence>
    <temperatureDependence>
        <text evidence="3">Optimum temperature is 55 degrees Celsius. Half-life at 70 degrees Celsius is 30 minutes.</text>
    </temperatureDependence>
</comment>
<comment type="subunit">
    <text evidence="3">Monomer.</text>
</comment>
<comment type="subcellular location">
    <subcellularLocation>
        <location evidence="3">Secreted</location>
    </subcellularLocation>
</comment>
<comment type="induction">
    <text evidence="3">By copper ions.</text>
</comment>
<comment type="PTM">
    <text evidence="3">Glycosylated; contains 16% carbohydrates.</text>
</comment>
<comment type="miscellaneous">
    <text>On the 2D-gel the determined pI of this protein is: 4.05, its MW is: 75 kDa.</text>
</comment>
<comment type="similarity">
    <text evidence="2">Belongs to the multicopper oxidase family.</text>
</comment>
<comment type="caution">
    <text evidence="4">The order of the peptides is unknown.</text>
</comment>
<feature type="chain" id="PRO_0000381738" description="Laccase-C1">
    <location>
        <begin position="1"/>
        <end position="63" status="greater than"/>
    </location>
</feature>
<feature type="unsure residue" description="L or I">
    <location>
        <position position="15"/>
    </location>
</feature>
<feature type="unsure residue" description="Q or K">
    <location>
        <position position="20"/>
    </location>
</feature>
<feature type="unsure residue" description="L or I">
    <location>
        <position position="22"/>
    </location>
</feature>
<feature type="unsure residue" description="L or I">
    <location>
        <position position="23"/>
    </location>
</feature>
<feature type="unsure residue" description="L or I">
    <location>
        <position position="34"/>
    </location>
</feature>
<feature type="unsure residue" description="Q or K">
    <location>
        <position position="35"/>
    </location>
</feature>
<feature type="unsure residue" description="K or Q">
    <location>
        <position position="38"/>
    </location>
</feature>
<feature type="unsure residue" description="L or I">
    <location>
        <position position="49"/>
    </location>
</feature>
<feature type="unsure residue" description="L or I">
    <location>
        <position position="51"/>
    </location>
</feature>
<feature type="unsure residue" description="L or K">
    <location>
        <position position="53"/>
    </location>
</feature>
<feature type="unsure residue" description="W or GE">
    <location>
        <position position="54"/>
    </location>
</feature>
<feature type="unsure residue" description="Q or K">
    <location>
        <position position="56"/>
    </location>
</feature>
<feature type="unsure residue" description="W or GE">
    <location>
        <position position="61"/>
    </location>
</feature>
<feature type="unsure residue" description="L or I">
    <location>
        <position position="62"/>
    </location>
</feature>
<feature type="non-consecutive residues" evidence="4">
    <location>
        <begin position="10"/>
        <end position="11"/>
    </location>
</feature>
<feature type="non-consecutive residues" evidence="4">
    <location>
        <begin position="24"/>
        <end position="25"/>
    </location>
</feature>
<feature type="non-consecutive residues" evidence="4">
    <location>
        <begin position="39"/>
        <end position="40"/>
    </location>
</feature>
<feature type="non-consecutive residues" evidence="4">
    <location>
        <begin position="50"/>
        <end position="51"/>
    </location>
</feature>
<feature type="non-terminal residue">
    <location>
        <position position="63"/>
    </location>
</feature>
<dbReference type="EC" id="1.10.3.2" evidence="3"/>
<dbReference type="GO" id="GO:0005576">
    <property type="term" value="C:extracellular region"/>
    <property type="evidence" value="ECO:0000314"/>
    <property type="project" value="UniProtKB"/>
</dbReference>
<dbReference type="GO" id="GO:0052716">
    <property type="term" value="F:hydroquinone:oxygen oxidoreductase activity"/>
    <property type="evidence" value="ECO:0000314"/>
    <property type="project" value="UniProtKB"/>
</dbReference>
<dbReference type="GO" id="GO:0046872">
    <property type="term" value="F:metal ion binding"/>
    <property type="evidence" value="ECO:0007669"/>
    <property type="project" value="UniProtKB-KW"/>
</dbReference>
<dbReference type="GO" id="GO:0046274">
    <property type="term" value="P:lignin catabolic process"/>
    <property type="evidence" value="ECO:0000314"/>
    <property type="project" value="UniProtKB"/>
</dbReference>
<evidence type="ECO:0000250" key="1">
    <source>
        <dbReference type="UniProtKB" id="Q12718"/>
    </source>
</evidence>
<evidence type="ECO:0000255" key="2"/>
<evidence type="ECO:0000269" key="3">
    <source>
    </source>
</evidence>
<evidence type="ECO:0000305" key="4"/>
<protein>
    <recommendedName>
        <fullName>Laccase-C1</fullName>
        <ecNumber evidence="3">1.10.3.2</ecNumber>
    </recommendedName>
    <alternativeName>
        <fullName evidence="1">Benzenediol:oxygen oxidoreductase C1</fullName>
    </alternativeName>
    <alternativeName>
        <fullName evidence="1">Diphenol oxidase C1</fullName>
    </alternativeName>
    <alternativeName>
        <fullName>Lac C1</fullName>
    </alternativeName>
    <alternativeName>
        <fullName evidence="1">Urishiol oxidase C1</fullName>
    </alternativeName>
</protein>
<reference key="1">
    <citation type="journal article" date="2010" name="J. Basic Microbiol.">
        <title>Two laccase isoforms of the basidiomycete Cerrena unicolor VKMF-3196. Induction, isolation and properties.</title>
        <authorList>
            <person name="Lisova Z.A."/>
            <person name="Lisov A.V."/>
            <person name="Leontievsky A.A."/>
        </authorList>
    </citation>
    <scope>PROTEIN SEQUENCE</scope>
    <scope>FUNCTION</scope>
    <scope>CATALYTIC ACTIVITY</scope>
    <scope>ACTIVITY REGULATION</scope>
    <scope>BIOPHYSICOCHEMICAL PROPERTIES</scope>
    <scope>SUBUNIT</scope>
    <scope>SUBCELLULAR LOCATION</scope>
    <scope>INDUCTION</scope>
    <scope>GLYCOSYLATION</scope>
    <source>
        <strain>VKM F-3196</strain>
    </source>
</reference>
<organism>
    <name type="scientific">Cerrena unicolor</name>
    <name type="common">Canker rot fungus</name>
    <name type="synonym">Daedalea unicolor</name>
    <dbReference type="NCBI Taxonomy" id="90312"/>
    <lineage>
        <taxon>Eukaryota</taxon>
        <taxon>Fungi</taxon>
        <taxon>Dikarya</taxon>
        <taxon>Basidiomycota</taxon>
        <taxon>Agaricomycotina</taxon>
        <taxon>Agaricomycetes</taxon>
        <taxon>Polyporales</taxon>
        <taxon>Cerrenaceae</taxon>
        <taxon>Cerrena</taxon>
    </lineage>
</organism>
<accession>P86328</accession>
<sequence>AIGPVADIDIDVVSLGMVDQSLLREMHEVSNVALQAMKGSDEYDFNANLRLVLWNQPDFMWLR</sequence>
<keyword id="KW-0186">Copper</keyword>
<keyword id="KW-0903">Direct protein sequencing</keyword>
<keyword id="KW-0439">Lignin degradation</keyword>
<keyword id="KW-0479">Metal-binding</keyword>
<keyword id="KW-0560">Oxidoreductase</keyword>
<keyword id="KW-0964">Secreted</keyword>
<name>LACC1_CERUI</name>
<proteinExistence type="evidence at protein level"/>